<keyword id="KW-0028">Amino-acid biosynthesis</keyword>
<keyword id="KW-0057">Aromatic amino acid biosynthesis</keyword>
<keyword id="KW-0456">Lyase</keyword>
<keyword id="KW-1185">Reference proteome</keyword>
<keyword id="KW-0822">Tryptophan biosynthesis</keyword>
<dbReference type="EC" id="4.2.1.20" evidence="1"/>
<dbReference type="EMBL" id="BX248361">
    <property type="protein sequence ID" value="CAE50883.1"/>
    <property type="molecule type" value="Genomic_DNA"/>
</dbReference>
<dbReference type="RefSeq" id="WP_010935792.1">
    <property type="nucleotide sequence ID" value="NC_002935.2"/>
</dbReference>
<dbReference type="SMR" id="Q6NEB5"/>
<dbReference type="STRING" id="257309.DIP2361"/>
<dbReference type="KEGG" id="cdi:DIP2361"/>
<dbReference type="HOGENOM" id="CLU_016734_0_4_11"/>
<dbReference type="UniPathway" id="UPA00035">
    <property type="reaction ID" value="UER00044"/>
</dbReference>
<dbReference type="Proteomes" id="UP000002198">
    <property type="component" value="Chromosome"/>
</dbReference>
<dbReference type="GO" id="GO:0005829">
    <property type="term" value="C:cytosol"/>
    <property type="evidence" value="ECO:0007669"/>
    <property type="project" value="TreeGrafter"/>
</dbReference>
<dbReference type="GO" id="GO:0004834">
    <property type="term" value="F:tryptophan synthase activity"/>
    <property type="evidence" value="ECO:0007669"/>
    <property type="project" value="UniProtKB-UniRule"/>
</dbReference>
<dbReference type="CDD" id="cd04724">
    <property type="entry name" value="Tryptophan_synthase_alpha"/>
    <property type="match status" value="1"/>
</dbReference>
<dbReference type="FunFam" id="3.20.20.70:FF:000037">
    <property type="entry name" value="Tryptophan synthase alpha chain"/>
    <property type="match status" value="1"/>
</dbReference>
<dbReference type="Gene3D" id="3.20.20.70">
    <property type="entry name" value="Aldolase class I"/>
    <property type="match status" value="1"/>
</dbReference>
<dbReference type="HAMAP" id="MF_00131">
    <property type="entry name" value="Trp_synth_alpha"/>
    <property type="match status" value="1"/>
</dbReference>
<dbReference type="InterPro" id="IPR013785">
    <property type="entry name" value="Aldolase_TIM"/>
</dbReference>
<dbReference type="InterPro" id="IPR011060">
    <property type="entry name" value="RibuloseP-bd_barrel"/>
</dbReference>
<dbReference type="InterPro" id="IPR018204">
    <property type="entry name" value="Trp_synthase_alpha_AS"/>
</dbReference>
<dbReference type="InterPro" id="IPR002028">
    <property type="entry name" value="Trp_synthase_suA"/>
</dbReference>
<dbReference type="NCBIfam" id="TIGR00262">
    <property type="entry name" value="trpA"/>
    <property type="match status" value="1"/>
</dbReference>
<dbReference type="PANTHER" id="PTHR43406:SF1">
    <property type="entry name" value="TRYPTOPHAN SYNTHASE ALPHA CHAIN, CHLOROPLASTIC"/>
    <property type="match status" value="1"/>
</dbReference>
<dbReference type="PANTHER" id="PTHR43406">
    <property type="entry name" value="TRYPTOPHAN SYNTHASE, ALPHA CHAIN"/>
    <property type="match status" value="1"/>
</dbReference>
<dbReference type="Pfam" id="PF00290">
    <property type="entry name" value="Trp_syntA"/>
    <property type="match status" value="1"/>
</dbReference>
<dbReference type="SUPFAM" id="SSF51366">
    <property type="entry name" value="Ribulose-phoshate binding barrel"/>
    <property type="match status" value="1"/>
</dbReference>
<dbReference type="PROSITE" id="PS00167">
    <property type="entry name" value="TRP_SYNTHASE_ALPHA"/>
    <property type="match status" value="1"/>
</dbReference>
<comment type="function">
    <text evidence="1">The alpha subunit is responsible for the aldol cleavage of indoleglycerol phosphate to indole and glyceraldehyde 3-phosphate.</text>
</comment>
<comment type="catalytic activity">
    <reaction evidence="1">
        <text>(1S,2R)-1-C-(indol-3-yl)glycerol 3-phosphate + L-serine = D-glyceraldehyde 3-phosphate + L-tryptophan + H2O</text>
        <dbReference type="Rhea" id="RHEA:10532"/>
        <dbReference type="ChEBI" id="CHEBI:15377"/>
        <dbReference type="ChEBI" id="CHEBI:33384"/>
        <dbReference type="ChEBI" id="CHEBI:57912"/>
        <dbReference type="ChEBI" id="CHEBI:58866"/>
        <dbReference type="ChEBI" id="CHEBI:59776"/>
        <dbReference type="EC" id="4.2.1.20"/>
    </reaction>
</comment>
<comment type="pathway">
    <text evidence="1">Amino-acid biosynthesis; L-tryptophan biosynthesis; L-tryptophan from chorismate: step 5/5.</text>
</comment>
<comment type="subunit">
    <text evidence="1">Tetramer of two alpha and two beta chains.</text>
</comment>
<comment type="similarity">
    <text evidence="1">Belongs to the TrpA family.</text>
</comment>
<reference key="1">
    <citation type="journal article" date="2003" name="Nucleic Acids Res.">
        <title>The complete genome sequence and analysis of Corynebacterium diphtheriae NCTC13129.</title>
        <authorList>
            <person name="Cerdeno-Tarraga A.-M."/>
            <person name="Efstratiou A."/>
            <person name="Dover L.G."/>
            <person name="Holden M.T.G."/>
            <person name="Pallen M.J."/>
            <person name="Bentley S.D."/>
            <person name="Besra G.S."/>
            <person name="Churcher C.M."/>
            <person name="James K.D."/>
            <person name="De Zoysa A."/>
            <person name="Chillingworth T."/>
            <person name="Cronin A."/>
            <person name="Dowd L."/>
            <person name="Feltwell T."/>
            <person name="Hamlin N."/>
            <person name="Holroyd S."/>
            <person name="Jagels K."/>
            <person name="Moule S."/>
            <person name="Quail M.A."/>
            <person name="Rabbinowitsch E."/>
            <person name="Rutherford K.M."/>
            <person name="Thomson N.R."/>
            <person name="Unwin L."/>
            <person name="Whitehead S."/>
            <person name="Barrell B.G."/>
            <person name="Parkhill J."/>
        </authorList>
    </citation>
    <scope>NUCLEOTIDE SEQUENCE [LARGE SCALE GENOMIC DNA]</scope>
    <source>
        <strain>ATCC 700971 / NCTC 13129 / Biotype gravis</strain>
    </source>
</reference>
<protein>
    <recommendedName>
        <fullName evidence="1">Tryptophan synthase alpha chain</fullName>
        <ecNumber evidence="1">4.2.1.20</ecNumber>
    </recommendedName>
</protein>
<sequence>MTRYTKLFSALSAKNEGAFVPFIMLGAPTPEASLAIIRTVVAAGADALELGVPFSDPVADGPTIQRSHLRALDNGATVDSSLELIRQIRKEFPELPIGMLIYGNVAFTRGITQFYQEFADAGVDSILLPDVPVREGEPFIAAAKQAGIDPIFIAPAQASEATLEGVAQHSSGYIYAISRDGVTGTERQSSTRGLDKVVANVKRFGGAPILLGFGISTPEHVRDAIAAGASGAITGSALTSIIERHTTGTHPEPAQVTDLEALTEEIFAFVKDMKAATR</sequence>
<accession>Q6NEB5</accession>
<gene>
    <name evidence="1" type="primary">trpA</name>
    <name type="ordered locus">DIP2361</name>
</gene>
<name>TRPA_CORDI</name>
<organism>
    <name type="scientific">Corynebacterium diphtheriae (strain ATCC 700971 / NCTC 13129 / Biotype gravis)</name>
    <dbReference type="NCBI Taxonomy" id="257309"/>
    <lineage>
        <taxon>Bacteria</taxon>
        <taxon>Bacillati</taxon>
        <taxon>Actinomycetota</taxon>
        <taxon>Actinomycetes</taxon>
        <taxon>Mycobacteriales</taxon>
        <taxon>Corynebacteriaceae</taxon>
        <taxon>Corynebacterium</taxon>
    </lineage>
</organism>
<feature type="chain" id="PRO_0000098771" description="Tryptophan synthase alpha chain">
    <location>
        <begin position="1"/>
        <end position="278"/>
    </location>
</feature>
<feature type="active site" description="Proton acceptor" evidence="1">
    <location>
        <position position="49"/>
    </location>
</feature>
<feature type="active site" description="Proton acceptor" evidence="1">
    <location>
        <position position="60"/>
    </location>
</feature>
<evidence type="ECO:0000255" key="1">
    <source>
        <dbReference type="HAMAP-Rule" id="MF_00131"/>
    </source>
</evidence>
<proteinExistence type="inferred from homology"/>